<comment type="function">
    <text evidence="1 2">Master regulator of synaptic plasticity that self-assembles into virion-like capsids that encapsulate RNAs and mediate intercellular RNA transfer in the nervous system. ARC protein is released from neurons in extracellular vesicles that mediate the transfer of ARC mRNA into new target cells, where ARC mRNA can undergo activity-dependent translation. ARC capsids are endocytosed and are able to transfer ARC mRNA into the cytoplasm of neurons. Acts as a key regulator of synaptic plasticity: required for protein synthesis-dependent forms of long-term potentiation (LTP) and depression (LTD) and for the formation of long-term memory. Regulates synaptic plasticity by promoting endocytosis of AMPA receptors (AMPARs) in response to synaptic activity: this endocytic pathway maintains levels of surface AMPARs in response to chronic changes in neuronal activity through synaptic scaling, thereby contributing to neuronal homeostasis. Acts as a postsynaptic mediator of activity-dependent synapse elimination in the developing cerebellum by mediating elimination of surplus climbing fiber synapses. Accumulates at weaker synapses, probably to prevent their undesired enhancement. This suggests that ARC-containing virion-like capsids may be required to eliminate synaptic material. Required to transduce experience into long-lasting changes in visual cortex plasticity and for long-term memory (By similarity). Involved in postsynaptic trafficking and processing of amyloid-beta A4 (APP) via interaction with PSEN1 (By similarity). In addition to its role in synapses, also involved in the regulation of the immune system: specifically expressed in skin-migratory dendritic cells and regulates fast dendritic cell migration, thereby regulating T-cell activation (By similarity).</text>
</comment>
<comment type="subunit">
    <text evidence="1 2 7">Homooligomer; homooligomerizes into virion-like capsids (PubMed:25748042). Interacts with SH3GL1/endophilin-2, SH3GL3/endophilin-3 and DNM2/DYN2 (By similarity). Interacts with CAMK2B (in the kinase inactive state); leading to target ARC to inactive synapses (By similarity). Interacts with PSEN1 (By similarity).</text>
</comment>
<comment type="interaction">
    <interactant intactId="EBI-750550">
        <id>Q7LC44</id>
    </interactant>
    <interactant intactId="EBI-2959737">
        <id>Q16527</id>
        <label>CSRP2</label>
    </interactant>
    <organismsDiffer>false</organismsDiffer>
    <experiments>3</experiments>
</comment>
<comment type="interaction">
    <interactant intactId="EBI-750550">
        <id>Q7LC44</id>
    </interactant>
    <interactant intactId="EBI-743700">
        <id>P25815</id>
        <label>S100P</label>
    </interactant>
    <organismsDiffer>false</organismsDiffer>
    <experiments>3</experiments>
</comment>
<comment type="interaction">
    <interactant intactId="EBI-750550">
        <id>Q7LC44</id>
    </interactant>
    <interactant intactId="EBI-747035">
        <id>Q9H788</id>
        <label>SH2D4A</label>
    </interactant>
    <organismsDiffer>false</organismsDiffer>
    <experiments>3</experiments>
</comment>
<comment type="interaction">
    <interactant intactId="EBI-750550">
        <id>Q7LC44</id>
    </interactant>
    <interactant intactId="EBI-12085364">
        <id>O95935</id>
        <label>TBX18</label>
    </interactant>
    <organismsDiffer>false</organismsDiffer>
    <experiments>3</experiments>
</comment>
<comment type="subcellular location">
    <subcellularLocation>
        <location evidence="1">Extracellular vesicle membrane</location>
        <topology evidence="2">Lipid-anchor</topology>
    </subcellularLocation>
    <subcellularLocation>
        <location evidence="2">Postsynaptic cell membrane</location>
        <topology evidence="2">Lipid-anchor</topology>
    </subcellularLocation>
    <subcellularLocation>
        <location evidence="1">Synapse</location>
    </subcellularLocation>
    <subcellularLocation>
        <location evidence="1">Postsynaptic density</location>
    </subcellularLocation>
    <subcellularLocation>
        <location evidence="1">Early endosome membrane</location>
    </subcellularLocation>
    <subcellularLocation>
        <location evidence="1">Cell projection</location>
        <location evidence="1">Dendrite</location>
    </subcellularLocation>
    <subcellularLocation>
        <location evidence="5">Cytoplasm</location>
        <location evidence="5">Cytoskeleton</location>
    </subcellularLocation>
    <subcellularLocation>
        <location evidence="1">Cytoplasm</location>
        <location evidence="1">Cell cortex</location>
    </subcellularLocation>
    <subcellularLocation>
        <location evidence="1">Cell projection</location>
        <location evidence="1">Dendritic spine</location>
    </subcellularLocation>
    <subcellularLocation>
        <location evidence="2">Cytoplasmic vesicle</location>
        <location evidence="2">Secretory vesicle</location>
        <location evidence="2">Acrosome</location>
    </subcellularLocation>
    <subcellularLocation>
        <location evidence="6">Cytoplasmic vesicle</location>
        <location evidence="6">Clathrin-coated vesicle membrane</location>
    </subcellularLocation>
    <text evidence="1 2">Forms virion-like extracellular vesicles that are released from neurons. Enriched in postsynaptic density of dendritic spines. Targeted to inactive synapses following interaction with CAMK2B in the kinase inactive state. Accumulation at weaker synapses may be required to prevent their undesired enhancement. Associated with the cell cortex of neuronal soma and dendrites (By similarity). Associated with the sperm tail (By similarity).</text>
</comment>
<comment type="domain">
    <text evidence="1">The protein is evolutionarily related to retrotransposon Gag proteins: it contains large N- and C-terminal domains that form a bi-lobar architecture similar to the capsid domain of human immunodeficiency virus (HIV) gag protein. It contains structural elements found within viral Gag polyproteins originated from the Ty3/gypsy retrotransposon family and retains the ability to form virion-like capsid structures that can mediate mRNA transfer between cells. Tetrapod and fly Arc protein-coding genes originated independently from distinct lineages of Ty3/gypsy retrotransposons.</text>
</comment>
<comment type="PTM">
    <text evidence="2">Palmitoylation anchors the protein into the membrane by allowing direct insertion into the hydrophobic core of the lipid bilayer.</text>
</comment>
<comment type="PTM">
    <text evidence="2 6">Ubiquitinated by UBE3A, leading to its degradation by the proteasome, thereby promoting AMPA receptors (AMPARs) expression at synapses (By similarity). Ubiquitinated by RNF216 at Lys-268 and Lys-269 limiting ARC protein levels induced by synaptic activity and thus regulating ARC-dependent forms of synaptic plasticity (PubMed:24945773).</text>
</comment>
<comment type="PTM">
    <text evidence="2">Phosphorylation at Ser-260 by CaMK2 prevents homooligomerization into virion-like capsids by disrupting an interaction surface essential for high-order oligomerization. Phosphorylation by CaMK2 inhibits synaptic activity.</text>
</comment>
<comment type="similarity">
    <text evidence="11">Belongs to the ARC/ARG3.1 family.</text>
</comment>
<comment type="sequence caution" evidence="11">
    <conflict type="erroneous initiation">
        <sequence resource="EMBL-CDS" id="BAA19667"/>
    </conflict>
</comment>
<gene>
    <name evidence="8 16" type="primary">ARC</name>
    <name evidence="10" type="synonym">KIAA0278</name>
</gene>
<reference evidence="12" key="1">
    <citation type="journal article" date="2000" name="Mol. Cell. Probes">
        <title>Mutation screening of the chromosome 8q24.3-human activity-regulated cytoskeleton-associated gene (ARC) in idiopathic generalized epilepsy.</title>
        <authorList>
            <person name="Haug K."/>
            <person name="Kremerskothen J."/>
            <person name="Hallmann K."/>
            <person name="Sander T."/>
            <person name="Dullinger J."/>
            <person name="Rau B."/>
            <person name="Beyenburg S."/>
            <person name="Lentze M.J."/>
            <person name="Barnekow A."/>
            <person name="Elger C.E."/>
            <person name="Propping P."/>
            <person name="Heils A."/>
        </authorList>
    </citation>
    <scope>NUCLEOTIDE SEQUENCE [GENOMIC DNA / MRNA]</scope>
    <source>
        <tissue evidence="12">Forebrain</tissue>
    </source>
</reference>
<reference evidence="15" key="2">
    <citation type="journal article" date="1996" name="DNA Res.">
        <title>Prediction of the coding sequences of unidentified human genes. VI. The coding sequences of 80 new genes (KIAA0201-KIAA0280) deduced by analysis of cDNA clones from cell line KG-1 and brain.</title>
        <authorList>
            <person name="Nagase T."/>
            <person name="Seki N."/>
            <person name="Ishikawa K."/>
            <person name="Ohira M."/>
            <person name="Kawarabayasi Y."/>
            <person name="Ohara O."/>
            <person name="Tanaka A."/>
            <person name="Kotani H."/>
            <person name="Miyajima N."/>
            <person name="Nomura N."/>
        </authorList>
    </citation>
    <scope>NUCLEOTIDE SEQUENCE [LARGE SCALE MRNA]</scope>
    <source>
        <tissue evidence="15">Brain</tissue>
    </source>
</reference>
<reference evidence="13" key="3">
    <citation type="journal article" date="2004" name="Genome Res.">
        <title>The status, quality, and expansion of the NIH full-length cDNA project: the Mammalian Gene Collection (MGC).</title>
        <authorList>
            <consortium name="The MGC Project Team"/>
        </authorList>
    </citation>
    <scope>NUCLEOTIDE SEQUENCE [LARGE SCALE MRNA]</scope>
    <source>
        <tissue evidence="14">Brain</tissue>
        <tissue evidence="13">Uterus</tissue>
    </source>
</reference>
<reference key="4">
    <citation type="journal article" date="2011" name="BMC Biol.">
        <title>Identification and characterization of a set of conserved and new regulators of cytoskeletal organisation, cell morphology and migration.</title>
        <authorList>
            <person name="Bai S.W."/>
            <person name="Herrera-Abreu M.T."/>
            <person name="Rohn J.L."/>
            <person name="Racine V."/>
            <person name="Tajadura V."/>
            <person name="Suryavanshi N."/>
            <person name="Bechtel S."/>
            <person name="Wiemann S."/>
            <person name="Baum B."/>
            <person name="Ridley A.J."/>
        </authorList>
    </citation>
    <scope>SUBCELLULAR LOCATION</scope>
</reference>
<reference key="5">
    <citation type="journal article" date="2014" name="Neuron">
        <title>Triad3A regulates synaptic strength by ubiquitination of Arc.</title>
        <authorList>
            <person name="Mabb A.M."/>
            <person name="Je H.S."/>
            <person name="Wall M.J."/>
            <person name="Robinson C.G."/>
            <person name="Larsen R.S."/>
            <person name="Qiang Y."/>
            <person name="Correa S.A."/>
            <person name="Ehlers M.D."/>
        </authorList>
    </citation>
    <scope>UBIQUITINATION BY RNF216 AT LYS-268 AND LYS-269</scope>
    <scope>MUTAGENESIS OF LYS-268 AND LYS-269</scope>
</reference>
<reference key="6">
    <citation type="journal article" date="2015" name="Biochem. J.">
        <title>Arc is a flexible modular protein capable of reversible self-oligomerization.</title>
        <authorList>
            <person name="Myrum C."/>
            <person name="Baumann A."/>
            <person name="Bustad H.J."/>
            <person name="Flydal M.I."/>
            <person name="Mariaule V."/>
            <person name="Alvira S."/>
            <person name="Cuellar J."/>
            <person name="Haavik J."/>
            <person name="Soule J."/>
            <person name="Valpuesta J.M."/>
            <person name="Marquez J.A."/>
            <person name="Martinez A."/>
            <person name="Bramham C.R."/>
        </authorList>
    </citation>
    <scope>SUBUNIT</scope>
</reference>
<name>ARC_HUMAN</name>
<accession>Q7LC44</accession>
<accession>Q9UJW6</accession>
<accession>Q9Y469</accession>
<dbReference type="EMBL" id="AF193421">
    <property type="protein sequence ID" value="AAF07185.1"/>
    <property type="molecule type" value="mRNA"/>
</dbReference>
<dbReference type="EMBL" id="AF248637">
    <property type="protein sequence ID" value="AAG33705.1"/>
    <property type="molecule type" value="Genomic_DNA"/>
</dbReference>
<dbReference type="EMBL" id="D87468">
    <property type="protein sequence ID" value="BAA19667.1"/>
    <property type="status" value="ALT_INIT"/>
    <property type="molecule type" value="mRNA"/>
</dbReference>
<dbReference type="EMBL" id="BC012321">
    <property type="protein sequence ID" value="AAH12321.1"/>
    <property type="molecule type" value="mRNA"/>
</dbReference>
<dbReference type="EMBL" id="BC075802">
    <property type="protein sequence ID" value="AAH75802.1"/>
    <property type="molecule type" value="mRNA"/>
</dbReference>
<dbReference type="CCDS" id="CCDS34950.1"/>
<dbReference type="RefSeq" id="NP_001399781.1">
    <property type="nucleotide sequence ID" value="NM_001412852.1"/>
</dbReference>
<dbReference type="RefSeq" id="NP_056008.1">
    <property type="nucleotide sequence ID" value="NM_015193.5"/>
</dbReference>
<dbReference type="PDB" id="6TN7">
    <property type="method" value="X-ray"/>
    <property type="resolution" value="1.67 A"/>
    <property type="chains" value="B=277-370"/>
</dbReference>
<dbReference type="PDB" id="6TNQ">
    <property type="method" value="X-ray"/>
    <property type="resolution" value="1.30 A"/>
    <property type="chains" value="A/C/E=207-277"/>
</dbReference>
<dbReference type="PDB" id="6TQ0">
    <property type="method" value="X-ray"/>
    <property type="resolution" value="1.95 A"/>
    <property type="chains" value="A/C/E/G/I/K/M/O=207-277"/>
</dbReference>
<dbReference type="PDB" id="6YTU">
    <property type="method" value="X-ray"/>
    <property type="resolution" value="0.95 A"/>
    <property type="chains" value="A/B=99-132"/>
</dbReference>
<dbReference type="PDB" id="7R1Z">
    <property type="method" value="X-ray"/>
    <property type="resolution" value="1.94 A"/>
    <property type="chains" value="A=206-361"/>
</dbReference>
<dbReference type="PDB" id="7R23">
    <property type="method" value="X-ray"/>
    <property type="resolution" value="2.77 A"/>
    <property type="chains" value="A=206-361"/>
</dbReference>
<dbReference type="PDB" id="8QF4">
    <property type="method" value="X-ray"/>
    <property type="resolution" value="1.02 A"/>
    <property type="chains" value="A=207-277"/>
</dbReference>
<dbReference type="PDB" id="8QF5">
    <property type="method" value="X-ray"/>
    <property type="resolution" value="1.50 A"/>
    <property type="chains" value="B/H=207-277"/>
</dbReference>
<dbReference type="PDBsum" id="6TN7"/>
<dbReference type="PDBsum" id="6TNQ"/>
<dbReference type="PDBsum" id="6TQ0"/>
<dbReference type="PDBsum" id="6YTU"/>
<dbReference type="PDBsum" id="7R1Z"/>
<dbReference type="PDBsum" id="7R23"/>
<dbReference type="PDBsum" id="8QF4"/>
<dbReference type="PDBsum" id="8QF5"/>
<dbReference type="SMR" id="Q7LC44"/>
<dbReference type="BioGRID" id="116842">
    <property type="interactions" value="25"/>
</dbReference>
<dbReference type="DIP" id="DIP-60107N"/>
<dbReference type="FunCoup" id="Q7LC44">
    <property type="interactions" value="50"/>
</dbReference>
<dbReference type="IntAct" id="Q7LC44">
    <property type="interactions" value="14"/>
</dbReference>
<dbReference type="MINT" id="Q7LC44"/>
<dbReference type="STRING" id="9606.ENSP00000349022"/>
<dbReference type="GlyGen" id="Q7LC44">
    <property type="glycosylation" value="1 site"/>
</dbReference>
<dbReference type="iPTMnet" id="Q7LC44"/>
<dbReference type="PhosphoSitePlus" id="Q7LC44"/>
<dbReference type="BioMuta" id="ARC"/>
<dbReference type="DMDM" id="74738627"/>
<dbReference type="MassIVE" id="Q7LC44"/>
<dbReference type="PaxDb" id="9606-ENSP00000349022"/>
<dbReference type="PeptideAtlas" id="Q7LC44"/>
<dbReference type="ProteomicsDB" id="68851"/>
<dbReference type="Antibodypedia" id="3992">
    <property type="antibodies" value="303 antibodies from 34 providers"/>
</dbReference>
<dbReference type="DNASU" id="23237"/>
<dbReference type="Ensembl" id="ENST00000356613.4">
    <property type="protein sequence ID" value="ENSP00000349022.2"/>
    <property type="gene ID" value="ENSG00000198576.4"/>
</dbReference>
<dbReference type="GeneID" id="23237"/>
<dbReference type="KEGG" id="hsa:23237"/>
<dbReference type="MANE-Select" id="ENST00000356613.4">
    <property type="protein sequence ID" value="ENSP00000349022.2"/>
    <property type="RefSeq nucleotide sequence ID" value="NM_015193.5"/>
    <property type="RefSeq protein sequence ID" value="NP_056008.1"/>
</dbReference>
<dbReference type="UCSC" id="uc003ywn.2">
    <property type="organism name" value="human"/>
</dbReference>
<dbReference type="AGR" id="HGNC:648"/>
<dbReference type="CTD" id="23237"/>
<dbReference type="DisGeNET" id="23237"/>
<dbReference type="GeneCards" id="ARC"/>
<dbReference type="HGNC" id="HGNC:648">
    <property type="gene designation" value="ARC"/>
</dbReference>
<dbReference type="HPA" id="ENSG00000198576">
    <property type="expression patterns" value="Tissue enhanced (brain, pituitary gland)"/>
</dbReference>
<dbReference type="MIM" id="612461">
    <property type="type" value="gene"/>
</dbReference>
<dbReference type="neXtProt" id="NX_Q7LC44"/>
<dbReference type="OpenTargets" id="ENSG00000198576"/>
<dbReference type="PharmGKB" id="PA24930"/>
<dbReference type="VEuPathDB" id="HostDB:ENSG00000198576"/>
<dbReference type="eggNOG" id="ENOG502QSPT">
    <property type="taxonomic scope" value="Eukaryota"/>
</dbReference>
<dbReference type="GeneTree" id="ENSGT00390000003914"/>
<dbReference type="HOGENOM" id="CLU_782004_0_0_1"/>
<dbReference type="InParanoid" id="Q7LC44"/>
<dbReference type="OMA" id="NWLEFKK"/>
<dbReference type="OrthoDB" id="9867597at2759"/>
<dbReference type="PAN-GO" id="Q7LC44">
    <property type="GO annotations" value="7 GO annotations based on evolutionary models"/>
</dbReference>
<dbReference type="PhylomeDB" id="Q7LC44"/>
<dbReference type="TreeFam" id="TF335604"/>
<dbReference type="PathwayCommons" id="Q7LC44"/>
<dbReference type="Reactome" id="R-HSA-9031628">
    <property type="pathway name" value="NGF-stimulated transcription"/>
</dbReference>
<dbReference type="SignaLink" id="Q7LC44"/>
<dbReference type="BioGRID-ORCS" id="23237">
    <property type="hits" value="11 hits in 1144 CRISPR screens"/>
</dbReference>
<dbReference type="GenomeRNAi" id="23237"/>
<dbReference type="Pharos" id="Q7LC44">
    <property type="development level" value="Tbio"/>
</dbReference>
<dbReference type="PRO" id="PR:Q7LC44"/>
<dbReference type="Proteomes" id="UP000005640">
    <property type="component" value="Chromosome 8"/>
</dbReference>
<dbReference type="RNAct" id="Q7LC44">
    <property type="molecule type" value="protein"/>
</dbReference>
<dbReference type="Bgee" id="ENSG00000198576">
    <property type="expression patterns" value="Expressed in adenohypophysis and 109 other cell types or tissues"/>
</dbReference>
<dbReference type="GO" id="GO:0001669">
    <property type="term" value="C:acrosomal vesicle"/>
    <property type="evidence" value="ECO:0007669"/>
    <property type="project" value="UniProtKB-SubCell"/>
</dbReference>
<dbReference type="GO" id="GO:0015629">
    <property type="term" value="C:actin cytoskeleton"/>
    <property type="evidence" value="ECO:0000318"/>
    <property type="project" value="GO_Central"/>
</dbReference>
<dbReference type="GO" id="GO:0005938">
    <property type="term" value="C:cell cortex"/>
    <property type="evidence" value="ECO:0007669"/>
    <property type="project" value="UniProtKB-SubCell"/>
</dbReference>
<dbReference type="GO" id="GO:0030665">
    <property type="term" value="C:clathrin-coated vesicle membrane"/>
    <property type="evidence" value="ECO:0007669"/>
    <property type="project" value="UniProtKB-SubCell"/>
</dbReference>
<dbReference type="GO" id="GO:0005737">
    <property type="term" value="C:cytoplasm"/>
    <property type="evidence" value="ECO:0000314"/>
    <property type="project" value="UniProtKB"/>
</dbReference>
<dbReference type="GO" id="GO:0005829">
    <property type="term" value="C:cytosol"/>
    <property type="evidence" value="ECO:0000304"/>
    <property type="project" value="Reactome"/>
</dbReference>
<dbReference type="GO" id="GO:0043197">
    <property type="term" value="C:dendritic spine"/>
    <property type="evidence" value="ECO:0000250"/>
    <property type="project" value="UniProtKB"/>
</dbReference>
<dbReference type="GO" id="GO:0031901">
    <property type="term" value="C:early endosome membrane"/>
    <property type="evidence" value="ECO:0007669"/>
    <property type="project" value="UniProtKB-SubCell"/>
</dbReference>
<dbReference type="GO" id="GO:1903561">
    <property type="term" value="C:extracellular vesicle"/>
    <property type="evidence" value="ECO:0000250"/>
    <property type="project" value="UniProtKB"/>
</dbReference>
<dbReference type="GO" id="GO:0098978">
    <property type="term" value="C:glutamatergic synapse"/>
    <property type="evidence" value="ECO:0007669"/>
    <property type="project" value="Ensembl"/>
</dbReference>
<dbReference type="GO" id="GO:0045121">
    <property type="term" value="C:membrane raft"/>
    <property type="evidence" value="ECO:0000250"/>
    <property type="project" value="UniProtKB"/>
</dbReference>
<dbReference type="GO" id="GO:0043025">
    <property type="term" value="C:neuronal cell body"/>
    <property type="evidence" value="ECO:0000304"/>
    <property type="project" value="ARUK-UCL"/>
</dbReference>
<dbReference type="GO" id="GO:0071598">
    <property type="term" value="C:neuronal ribonucleoprotein granule"/>
    <property type="evidence" value="ECO:0007669"/>
    <property type="project" value="Ensembl"/>
</dbReference>
<dbReference type="GO" id="GO:0005886">
    <property type="term" value="C:plasma membrane"/>
    <property type="evidence" value="ECO:0000314"/>
    <property type="project" value="UniProtKB"/>
</dbReference>
<dbReference type="GO" id="GO:0014069">
    <property type="term" value="C:postsynaptic density"/>
    <property type="evidence" value="ECO:0007669"/>
    <property type="project" value="UniProtKB-SubCell"/>
</dbReference>
<dbReference type="GO" id="GO:0045211">
    <property type="term" value="C:postsynaptic membrane"/>
    <property type="evidence" value="ECO:0007669"/>
    <property type="project" value="UniProtKB-SubCell"/>
</dbReference>
<dbReference type="GO" id="GO:0170047">
    <property type="term" value="C:virus-like capsid"/>
    <property type="evidence" value="ECO:0000314"/>
    <property type="project" value="FlyBase"/>
</dbReference>
<dbReference type="GO" id="GO:0003729">
    <property type="term" value="F:mRNA binding"/>
    <property type="evidence" value="ECO:0000314"/>
    <property type="project" value="FlyBase"/>
</dbReference>
<dbReference type="GO" id="GO:0005198">
    <property type="term" value="F:structural molecule activity"/>
    <property type="evidence" value="ECO:0000314"/>
    <property type="project" value="FlyBase"/>
</dbReference>
<dbReference type="GO" id="GO:0009952">
    <property type="term" value="P:anterior/posterior pattern specification"/>
    <property type="evidence" value="ECO:0007669"/>
    <property type="project" value="Ensembl"/>
</dbReference>
<dbReference type="GO" id="GO:0016477">
    <property type="term" value="P:cell migration"/>
    <property type="evidence" value="ECO:0000315"/>
    <property type="project" value="UniProtKB"/>
</dbReference>
<dbReference type="GO" id="GO:0007010">
    <property type="term" value="P:cytoskeleton organization"/>
    <property type="evidence" value="ECO:0000315"/>
    <property type="project" value="UniProtKB"/>
</dbReference>
<dbReference type="GO" id="GO:0060997">
    <property type="term" value="P:dendritic spine morphogenesis"/>
    <property type="evidence" value="ECO:0000304"/>
    <property type="project" value="ARUK-UCL"/>
</dbReference>
<dbReference type="GO" id="GO:0006897">
    <property type="term" value="P:endocytosis"/>
    <property type="evidence" value="ECO:0007669"/>
    <property type="project" value="UniProtKB-KW"/>
</dbReference>
<dbReference type="GO" id="GO:0007492">
    <property type="term" value="P:endoderm development"/>
    <property type="evidence" value="ECO:0007669"/>
    <property type="project" value="Ensembl"/>
</dbReference>
<dbReference type="GO" id="GO:0007616">
    <property type="term" value="P:long-term memory"/>
    <property type="evidence" value="ECO:0000250"/>
    <property type="project" value="UniProtKB"/>
</dbReference>
<dbReference type="GO" id="GO:0060291">
    <property type="term" value="P:long-term synaptic potentiation"/>
    <property type="evidence" value="ECO:0000304"/>
    <property type="project" value="ARUK-UCL"/>
</dbReference>
<dbReference type="GO" id="GO:0050804">
    <property type="term" value="P:modulation of chemical synaptic transmission"/>
    <property type="evidence" value="ECO:0000250"/>
    <property type="project" value="UniProtKB"/>
</dbReference>
<dbReference type="GO" id="GO:0051028">
    <property type="term" value="P:mRNA transport"/>
    <property type="evidence" value="ECO:0000250"/>
    <property type="project" value="UniProtKB"/>
</dbReference>
<dbReference type="GO" id="GO:0051260">
    <property type="term" value="P:protein homooligomerization"/>
    <property type="evidence" value="ECO:0000250"/>
    <property type="project" value="UniProtKB"/>
</dbReference>
<dbReference type="GO" id="GO:0022604">
    <property type="term" value="P:regulation of cell morphogenesis"/>
    <property type="evidence" value="ECO:0000315"/>
    <property type="project" value="UniProtKB"/>
</dbReference>
<dbReference type="GO" id="GO:0061001">
    <property type="term" value="P:regulation of dendritic spine morphogenesis"/>
    <property type="evidence" value="ECO:0000250"/>
    <property type="project" value="ARUK-UCL"/>
</dbReference>
<dbReference type="GO" id="GO:1900452">
    <property type="term" value="P:regulation of long-term synaptic depression"/>
    <property type="evidence" value="ECO:0000250"/>
    <property type="project" value="UniProtKB"/>
</dbReference>
<dbReference type="GO" id="GO:1900271">
    <property type="term" value="P:regulation of long-term synaptic potentiation"/>
    <property type="evidence" value="ECO:0000250"/>
    <property type="project" value="UniProtKB"/>
</dbReference>
<dbReference type="GO" id="GO:0048168">
    <property type="term" value="P:regulation of neuronal synaptic plasticity"/>
    <property type="evidence" value="ECO:0000318"/>
    <property type="project" value="GO_Central"/>
</dbReference>
<dbReference type="GO" id="GO:0099149">
    <property type="term" value="P:regulation of postsynaptic neurotransmitter receptor internalization"/>
    <property type="evidence" value="ECO:0007669"/>
    <property type="project" value="Ensembl"/>
</dbReference>
<dbReference type="GO" id="GO:0110077">
    <property type="term" value="P:vesicle-mediated intercellular transport"/>
    <property type="evidence" value="ECO:0000250"/>
    <property type="project" value="UniProtKB"/>
</dbReference>
<dbReference type="InterPro" id="IPR023263">
    <property type="entry name" value="Arc"/>
</dbReference>
<dbReference type="InterPro" id="IPR040814">
    <property type="entry name" value="Arc_C"/>
</dbReference>
<dbReference type="InterPro" id="IPR048965">
    <property type="entry name" value="Arc_capsid_dom"/>
</dbReference>
<dbReference type="InterPro" id="IPR045557">
    <property type="entry name" value="Arc_N"/>
</dbReference>
<dbReference type="PANTHER" id="PTHR15962">
    <property type="entry name" value="ACTIVITY-REGULATED CYTOSKELETON-ASSOCIATED PROTEIN"/>
    <property type="match status" value="1"/>
</dbReference>
<dbReference type="PANTHER" id="PTHR15962:SF0">
    <property type="entry name" value="ACTIVITY-REGULATED CYTOSKELETON-ASSOCIATED PROTEIN"/>
    <property type="match status" value="1"/>
</dbReference>
<dbReference type="Pfam" id="PF18162">
    <property type="entry name" value="Arc_C"/>
    <property type="match status" value="1"/>
</dbReference>
<dbReference type="Pfam" id="PF21395">
    <property type="entry name" value="Arc_capsid_dom"/>
    <property type="match status" value="1"/>
</dbReference>
<dbReference type="Pfam" id="PF19284">
    <property type="entry name" value="Arc_MA"/>
    <property type="match status" value="1"/>
</dbReference>
<dbReference type="PRINTS" id="PR02027">
    <property type="entry name" value="ARCARG31"/>
</dbReference>
<evidence type="ECO:0000250" key="1">
    <source>
        <dbReference type="UniProtKB" id="Q63053"/>
    </source>
</evidence>
<evidence type="ECO:0000250" key="2">
    <source>
        <dbReference type="UniProtKB" id="Q9WV31"/>
    </source>
</evidence>
<evidence type="ECO:0000255" key="3"/>
<evidence type="ECO:0000256" key="4">
    <source>
        <dbReference type="SAM" id="MobiDB-lite"/>
    </source>
</evidence>
<evidence type="ECO:0000269" key="5">
    <source>
    </source>
</evidence>
<evidence type="ECO:0000269" key="6">
    <source>
    </source>
</evidence>
<evidence type="ECO:0000269" key="7">
    <source>
    </source>
</evidence>
<evidence type="ECO:0000303" key="8">
    <source>
    </source>
</evidence>
<evidence type="ECO:0000303" key="9">
    <source>
    </source>
</evidence>
<evidence type="ECO:0000303" key="10">
    <source>
    </source>
</evidence>
<evidence type="ECO:0000305" key="11"/>
<evidence type="ECO:0000312" key="12">
    <source>
        <dbReference type="EMBL" id="AAF07185.1"/>
    </source>
</evidence>
<evidence type="ECO:0000312" key="13">
    <source>
        <dbReference type="EMBL" id="AAH12321.1"/>
    </source>
</evidence>
<evidence type="ECO:0000312" key="14">
    <source>
        <dbReference type="EMBL" id="AAH75802.1"/>
    </source>
</evidence>
<evidence type="ECO:0000312" key="15">
    <source>
        <dbReference type="EMBL" id="BAA19667.1"/>
    </source>
</evidence>
<evidence type="ECO:0000312" key="16">
    <source>
        <dbReference type="HGNC" id="HGNC:648"/>
    </source>
</evidence>
<evidence type="ECO:0007829" key="17">
    <source>
        <dbReference type="PDB" id="6TN7"/>
    </source>
</evidence>
<evidence type="ECO:0007829" key="18">
    <source>
        <dbReference type="PDB" id="6TNQ"/>
    </source>
</evidence>
<evidence type="ECO:0007829" key="19">
    <source>
        <dbReference type="PDB" id="6YTU"/>
    </source>
</evidence>
<proteinExistence type="evidence at protein level"/>
<feature type="chain" id="PRO_0000273285" description="Activity-regulated cytoskeleton-associated protein">
    <location>
        <begin position="1"/>
        <end position="396"/>
    </location>
</feature>
<feature type="region of interest" description="Interaction with SH3GL1 or SH3GL3" evidence="1">
    <location>
        <begin position="89"/>
        <end position="100"/>
    </location>
</feature>
<feature type="region of interest" description="Interaction with DNM2" evidence="1">
    <location>
        <begin position="195"/>
        <end position="214"/>
    </location>
</feature>
<feature type="region of interest" description="Disordered" evidence="4">
    <location>
        <begin position="356"/>
        <end position="396"/>
    </location>
</feature>
<feature type="coiled-coil region" evidence="3">
    <location>
        <begin position="54"/>
        <end position="78"/>
    </location>
</feature>
<feature type="compositionally biased region" description="Polar residues" evidence="4">
    <location>
        <begin position="381"/>
        <end position="396"/>
    </location>
</feature>
<feature type="modified residue" description="Phosphoserine" evidence="2">
    <location>
        <position position="260"/>
    </location>
</feature>
<feature type="modified residue" description="Phosphothreonine" evidence="2">
    <location>
        <position position="278"/>
    </location>
</feature>
<feature type="cross-link" description="Glycyl lysine isopeptide (Lys-Gly) (interchain with G-Cter in ubiquitin)" evidence="6">
    <location>
        <position position="268"/>
    </location>
</feature>
<feature type="cross-link" description="Glycyl lysine isopeptide (Lys-Gly) (interchain with G-Cter in ubiquitin)" evidence="6">
    <location>
        <position position="269"/>
    </location>
</feature>
<feature type="mutagenesis site" description="Complete loss of RNF216-mediated ubiquitination; when associated by A-269." evidence="6">
    <original>K</original>
    <variation>A</variation>
    <location>
        <position position="268"/>
    </location>
</feature>
<feature type="mutagenesis site" description="Complete loss of RNF216-mediated ubiquitination; when associated by A-268." evidence="6">
    <original>K</original>
    <variation>A</variation>
    <location>
        <position position="269"/>
    </location>
</feature>
<feature type="helix" evidence="19">
    <location>
        <begin position="100"/>
        <end position="130"/>
    </location>
</feature>
<feature type="turn" evidence="18">
    <location>
        <begin position="207"/>
        <end position="210"/>
    </location>
</feature>
<feature type="strand" evidence="18">
    <location>
        <begin position="212"/>
        <end position="214"/>
    </location>
</feature>
<feature type="helix" evidence="18">
    <location>
        <begin position="217"/>
        <end position="231"/>
    </location>
</feature>
<feature type="helix" evidence="18">
    <location>
        <begin position="235"/>
        <end position="241"/>
    </location>
</feature>
<feature type="helix" evidence="18">
    <location>
        <begin position="242"/>
        <end position="245"/>
    </location>
</feature>
<feature type="helix" evidence="18">
    <location>
        <begin position="249"/>
        <end position="257"/>
    </location>
</feature>
<feature type="helix" evidence="18">
    <location>
        <begin position="258"/>
        <end position="260"/>
    </location>
</feature>
<feature type="helix" evidence="18">
    <location>
        <begin position="264"/>
        <end position="276"/>
    </location>
</feature>
<feature type="helix" evidence="17">
    <location>
        <begin position="281"/>
        <end position="288"/>
    </location>
</feature>
<feature type="helix" evidence="17">
    <location>
        <begin position="298"/>
        <end position="312"/>
    </location>
</feature>
<feature type="helix" evidence="17">
    <location>
        <begin position="318"/>
        <end position="327"/>
    </location>
</feature>
<feature type="helix" evidence="17">
    <location>
        <begin position="331"/>
        <end position="337"/>
    </location>
</feature>
<feature type="turn" evidence="17">
    <location>
        <begin position="338"/>
        <end position="340"/>
    </location>
</feature>
<feature type="helix" evidence="17">
    <location>
        <begin position="345"/>
        <end position="363"/>
    </location>
</feature>
<protein>
    <recommendedName>
        <fullName evidence="8">Activity-regulated cytoskeleton-associated protein</fullName>
        <shortName evidence="9">hArc</shortName>
    </recommendedName>
    <alternativeName>
        <fullName evidence="2">Activity-regulated gene 3.1 protein homolog</fullName>
        <shortName evidence="2">ARC/ARG3.1</shortName>
        <shortName evidence="2">Arg3.1</shortName>
    </alternativeName>
</protein>
<organism>
    <name type="scientific">Homo sapiens</name>
    <name type="common">Human</name>
    <dbReference type="NCBI Taxonomy" id="9606"/>
    <lineage>
        <taxon>Eukaryota</taxon>
        <taxon>Metazoa</taxon>
        <taxon>Chordata</taxon>
        <taxon>Craniata</taxon>
        <taxon>Vertebrata</taxon>
        <taxon>Euteleostomi</taxon>
        <taxon>Mammalia</taxon>
        <taxon>Eutheria</taxon>
        <taxon>Euarchontoglires</taxon>
        <taxon>Primates</taxon>
        <taxon>Haplorrhini</taxon>
        <taxon>Catarrhini</taxon>
        <taxon>Hominidae</taxon>
        <taxon>Homo</taxon>
    </lineage>
</organism>
<keyword id="KW-0002">3D-structure</keyword>
<keyword id="KW-1003">Cell membrane</keyword>
<keyword id="KW-0966">Cell projection</keyword>
<keyword id="KW-0175">Coiled coil</keyword>
<keyword id="KW-0963">Cytoplasm</keyword>
<keyword id="KW-0968">Cytoplasmic vesicle</keyword>
<keyword id="KW-0206">Cytoskeleton</keyword>
<keyword id="KW-0217">Developmental protein</keyword>
<keyword id="KW-0254">Endocytosis</keyword>
<keyword id="KW-0967">Endosome</keyword>
<keyword id="KW-1017">Isopeptide bond</keyword>
<keyword id="KW-0449">Lipoprotein</keyword>
<keyword id="KW-0472">Membrane</keyword>
<keyword id="KW-0564">Palmitate</keyword>
<keyword id="KW-0597">Phosphoprotein</keyword>
<keyword id="KW-0628">Postsynaptic cell membrane</keyword>
<keyword id="KW-1267">Proteomics identification</keyword>
<keyword id="KW-1185">Reference proteome</keyword>
<keyword id="KW-0694">RNA-binding</keyword>
<keyword id="KW-0770">Synapse</keyword>
<keyword id="KW-0813">Transport</keyword>
<keyword id="KW-0832">Ubl conjugation</keyword>
<sequence length="396" mass="45316">MELDHRTSGGLHAYPGPRGGQVAKPNVILQIGKCRAEMLEHVRRTHRHLLAEVSKQVERELKGLHRSVGKLESNLDGYVPTSDSQRWKKSIKACLCRCQETIANLERWVKREMHVWREVFYRLERWADRLESTGGKYPVGSESARHTVSVGVGGPESYCHEADGYDYTVSPYAITPPPAAGELPGQEPAEAQQYQPWVPGEDGQPSPGVDTQIFEDPREFLSHLEEYLRQVGGSEEYWLSQIQNHMNGPAKKWWEFKQGSVKNWVEFKKEFLQYSEGTLSREAIQRELDLPQKQGEPLDQFLWRKRDLYQTLYVDADEEEIIQYVVGTLQPKLKRFLRHPLPKTLEQLIQRGMEVQDDLEQAAEPAGPHLPVEDEAETLTPAPNSESVASDRTQPE</sequence>